<reference key="1">
    <citation type="journal article" date="2005" name="Nat. Biotechnol.">
        <title>The complete genome sequence of the meat-borne lactic acid bacterium Lactobacillus sakei 23K.</title>
        <authorList>
            <person name="Chaillou S."/>
            <person name="Champomier-Verges M.-C."/>
            <person name="Cornet M."/>
            <person name="Crutz-Le Coq A.-M."/>
            <person name="Dudez A.-M."/>
            <person name="Martin V."/>
            <person name="Beaufils S."/>
            <person name="Darbon-Rongere E."/>
            <person name="Bossy R."/>
            <person name="Loux V."/>
            <person name="Zagorec M."/>
        </authorList>
    </citation>
    <scope>NUCLEOTIDE SEQUENCE [LARGE SCALE GENOMIC DNA]</scope>
    <source>
        <strain>23K</strain>
    </source>
</reference>
<evidence type="ECO:0000255" key="1">
    <source>
        <dbReference type="HAMAP-Rule" id="MF_00038"/>
    </source>
</evidence>
<dbReference type="EC" id="2.7.8.13" evidence="1"/>
<dbReference type="EMBL" id="CR936503">
    <property type="protein sequence ID" value="CAI55050.1"/>
    <property type="molecule type" value="Genomic_DNA"/>
</dbReference>
<dbReference type="RefSeq" id="WP_011374453.1">
    <property type="nucleotide sequence ID" value="NC_007576.1"/>
</dbReference>
<dbReference type="SMR" id="Q38XN0"/>
<dbReference type="STRING" id="314315.LCA_0746"/>
<dbReference type="KEGG" id="lsa:LCA_0746"/>
<dbReference type="eggNOG" id="COG0472">
    <property type="taxonomic scope" value="Bacteria"/>
</dbReference>
<dbReference type="HOGENOM" id="CLU_023982_0_1_9"/>
<dbReference type="OrthoDB" id="9805475at2"/>
<dbReference type="UniPathway" id="UPA00219"/>
<dbReference type="Proteomes" id="UP000002707">
    <property type="component" value="Chromosome"/>
</dbReference>
<dbReference type="GO" id="GO:0005886">
    <property type="term" value="C:plasma membrane"/>
    <property type="evidence" value="ECO:0007669"/>
    <property type="project" value="UniProtKB-SubCell"/>
</dbReference>
<dbReference type="GO" id="GO:0046872">
    <property type="term" value="F:metal ion binding"/>
    <property type="evidence" value="ECO:0007669"/>
    <property type="project" value="UniProtKB-KW"/>
</dbReference>
<dbReference type="GO" id="GO:0008963">
    <property type="term" value="F:phospho-N-acetylmuramoyl-pentapeptide-transferase activity"/>
    <property type="evidence" value="ECO:0007669"/>
    <property type="project" value="UniProtKB-UniRule"/>
</dbReference>
<dbReference type="GO" id="GO:0051301">
    <property type="term" value="P:cell division"/>
    <property type="evidence" value="ECO:0007669"/>
    <property type="project" value="UniProtKB-KW"/>
</dbReference>
<dbReference type="GO" id="GO:0071555">
    <property type="term" value="P:cell wall organization"/>
    <property type="evidence" value="ECO:0007669"/>
    <property type="project" value="UniProtKB-KW"/>
</dbReference>
<dbReference type="GO" id="GO:0009252">
    <property type="term" value="P:peptidoglycan biosynthetic process"/>
    <property type="evidence" value="ECO:0007669"/>
    <property type="project" value="UniProtKB-UniRule"/>
</dbReference>
<dbReference type="GO" id="GO:0008360">
    <property type="term" value="P:regulation of cell shape"/>
    <property type="evidence" value="ECO:0007669"/>
    <property type="project" value="UniProtKB-KW"/>
</dbReference>
<dbReference type="CDD" id="cd06852">
    <property type="entry name" value="GT_MraY"/>
    <property type="match status" value="1"/>
</dbReference>
<dbReference type="HAMAP" id="MF_00038">
    <property type="entry name" value="MraY"/>
    <property type="match status" value="1"/>
</dbReference>
<dbReference type="InterPro" id="IPR000715">
    <property type="entry name" value="Glycosyl_transferase_4"/>
</dbReference>
<dbReference type="InterPro" id="IPR003524">
    <property type="entry name" value="PNAcMuramoyl-5peptid_Trfase"/>
</dbReference>
<dbReference type="InterPro" id="IPR018480">
    <property type="entry name" value="PNAcMuramoyl-5peptid_Trfase_CS"/>
</dbReference>
<dbReference type="NCBIfam" id="TIGR00445">
    <property type="entry name" value="mraY"/>
    <property type="match status" value="1"/>
</dbReference>
<dbReference type="PANTHER" id="PTHR22926">
    <property type="entry name" value="PHOSPHO-N-ACETYLMURAMOYL-PENTAPEPTIDE-TRANSFERASE"/>
    <property type="match status" value="1"/>
</dbReference>
<dbReference type="PANTHER" id="PTHR22926:SF5">
    <property type="entry name" value="PHOSPHO-N-ACETYLMURAMOYL-PENTAPEPTIDE-TRANSFERASE HOMOLOG"/>
    <property type="match status" value="1"/>
</dbReference>
<dbReference type="Pfam" id="PF00953">
    <property type="entry name" value="Glycos_transf_4"/>
    <property type="match status" value="1"/>
</dbReference>
<dbReference type="Pfam" id="PF10555">
    <property type="entry name" value="MraY_sig1"/>
    <property type="match status" value="1"/>
</dbReference>
<dbReference type="PROSITE" id="PS01347">
    <property type="entry name" value="MRAY_1"/>
    <property type="match status" value="1"/>
</dbReference>
<dbReference type="PROSITE" id="PS01348">
    <property type="entry name" value="MRAY_2"/>
    <property type="match status" value="1"/>
</dbReference>
<protein>
    <recommendedName>
        <fullName evidence="1">Phospho-N-acetylmuramoyl-pentapeptide-transferase</fullName>
        <ecNumber evidence="1">2.7.8.13</ecNumber>
    </recommendedName>
    <alternativeName>
        <fullName evidence="1">UDP-MurNAc-pentapeptide phosphotransferase</fullName>
    </alternativeName>
</protein>
<comment type="function">
    <text evidence="1">Catalyzes the initial step of the lipid cycle reactions in the biosynthesis of the cell wall peptidoglycan: transfers peptidoglycan precursor phospho-MurNAc-pentapeptide from UDP-MurNAc-pentapeptide onto the lipid carrier undecaprenyl phosphate, yielding undecaprenyl-pyrophosphoryl-MurNAc-pentapeptide, known as lipid I.</text>
</comment>
<comment type="catalytic activity">
    <reaction evidence="1">
        <text>UDP-N-acetyl-alpha-D-muramoyl-L-alanyl-gamma-D-glutamyl-L-lysyl-D-alanyl-D-alanine + di-trans,octa-cis-undecaprenyl phosphate = Mur2Ac(oyl-L-Ala-gamma-D-Glu-L-Lys-D-Ala-D-Ala)-di-trans,octa-cis-undecaprenyl diphosphate + UMP</text>
        <dbReference type="Rhea" id="RHEA:21920"/>
        <dbReference type="ChEBI" id="CHEBI:57865"/>
        <dbReference type="ChEBI" id="CHEBI:60032"/>
        <dbReference type="ChEBI" id="CHEBI:60392"/>
        <dbReference type="ChEBI" id="CHEBI:70758"/>
        <dbReference type="EC" id="2.7.8.13"/>
    </reaction>
</comment>
<comment type="cofactor">
    <cofactor evidence="1">
        <name>Mg(2+)</name>
        <dbReference type="ChEBI" id="CHEBI:18420"/>
    </cofactor>
</comment>
<comment type="pathway">
    <text evidence="1">Cell wall biogenesis; peptidoglycan biosynthesis.</text>
</comment>
<comment type="subcellular location">
    <subcellularLocation>
        <location evidence="1">Cell membrane</location>
        <topology evidence="1">Multi-pass membrane protein</topology>
    </subcellularLocation>
</comment>
<comment type="similarity">
    <text evidence="1">Belongs to the glycosyltransferase 4 family. MraY subfamily.</text>
</comment>
<keyword id="KW-0131">Cell cycle</keyword>
<keyword id="KW-0132">Cell division</keyword>
<keyword id="KW-1003">Cell membrane</keyword>
<keyword id="KW-0133">Cell shape</keyword>
<keyword id="KW-0961">Cell wall biogenesis/degradation</keyword>
<keyword id="KW-0460">Magnesium</keyword>
<keyword id="KW-0472">Membrane</keyword>
<keyword id="KW-0479">Metal-binding</keyword>
<keyword id="KW-0573">Peptidoglycan synthesis</keyword>
<keyword id="KW-1185">Reference proteome</keyword>
<keyword id="KW-0808">Transferase</keyword>
<keyword id="KW-0812">Transmembrane</keyword>
<keyword id="KW-1133">Transmembrane helix</keyword>
<name>MRAY_LATSS</name>
<organism>
    <name type="scientific">Latilactobacillus sakei subsp. sakei (strain 23K)</name>
    <name type="common">Lactobacillus sakei subsp. sakei</name>
    <dbReference type="NCBI Taxonomy" id="314315"/>
    <lineage>
        <taxon>Bacteria</taxon>
        <taxon>Bacillati</taxon>
        <taxon>Bacillota</taxon>
        <taxon>Bacilli</taxon>
        <taxon>Lactobacillales</taxon>
        <taxon>Lactobacillaceae</taxon>
        <taxon>Latilactobacillus</taxon>
    </lineage>
</organism>
<sequence>MLTGQFLTPLMSGFVITVIFMPLFIGYLRFKKEGQTIRDEGPKWHAKKNGTPTMGGLVFIVAAVISSIWVAIWLQQLTNSLWIALFILVLYGLLGFSDDFIKVFKKQNLGLRAWQKLAGQILGGAVFLAVYFHEGFSHALNIPLIGTISSSWFFSLFVIVWLVGFSNAVNLADGIDGLVAGLAIVSFATYTIIAFRQNRIDVAIFGLTIIGGLIGFLIFNHKPAQIFMGDVGSLALGGALAAMSILLHREFSLLLIGLVYVIETASVMLQVASFKLFHKRIFKMSPIHHHFEMSGWSEWRIDISFWVFSIICSAIYLLIF</sequence>
<feature type="chain" id="PRO_0000235455" description="Phospho-N-acetylmuramoyl-pentapeptide-transferase">
    <location>
        <begin position="1"/>
        <end position="320"/>
    </location>
</feature>
<feature type="transmembrane region" description="Helical" evidence="1">
    <location>
        <begin position="6"/>
        <end position="26"/>
    </location>
</feature>
<feature type="transmembrane region" description="Helical" evidence="1">
    <location>
        <begin position="54"/>
        <end position="74"/>
    </location>
</feature>
<feature type="transmembrane region" description="Helical" evidence="1">
    <location>
        <begin position="81"/>
        <end position="101"/>
    </location>
</feature>
<feature type="transmembrane region" description="Helical" evidence="1">
    <location>
        <begin position="117"/>
        <end position="137"/>
    </location>
</feature>
<feature type="transmembrane region" description="Helical" evidence="1">
    <location>
        <begin position="145"/>
        <end position="165"/>
    </location>
</feature>
<feature type="transmembrane region" description="Helical" evidence="1">
    <location>
        <begin position="175"/>
        <end position="195"/>
    </location>
</feature>
<feature type="transmembrane region" description="Helical" evidence="1">
    <location>
        <begin position="200"/>
        <end position="220"/>
    </location>
</feature>
<feature type="transmembrane region" description="Helical" evidence="1">
    <location>
        <begin position="226"/>
        <end position="246"/>
    </location>
</feature>
<feature type="transmembrane region" description="Helical" evidence="1">
    <location>
        <begin position="251"/>
        <end position="271"/>
    </location>
</feature>
<feature type="transmembrane region" description="Helical" evidence="1">
    <location>
        <begin position="300"/>
        <end position="320"/>
    </location>
</feature>
<gene>
    <name evidence="1" type="primary">mraY</name>
    <name type="ordered locus">LCA_0746</name>
</gene>
<accession>Q38XN0</accession>
<proteinExistence type="inferred from homology"/>